<protein>
    <recommendedName>
        <fullName evidence="1">Type III pantothenate kinase</fullName>
        <ecNumber evidence="1">2.7.1.33</ecNumber>
    </recommendedName>
    <alternativeName>
        <fullName evidence="1">PanK-III</fullName>
    </alternativeName>
    <alternativeName>
        <fullName evidence="1">Pantothenic acid kinase</fullName>
    </alternativeName>
</protein>
<accession>Q899H1</accession>
<dbReference type="EC" id="2.7.1.33" evidence="1"/>
<dbReference type="EMBL" id="AE015927">
    <property type="protein sequence ID" value="AAO34855.1"/>
    <property type="molecule type" value="Genomic_DNA"/>
</dbReference>
<dbReference type="RefSeq" id="WP_011098525.1">
    <property type="nucleotide sequence ID" value="NC_004557.1"/>
</dbReference>
<dbReference type="SMR" id="Q899H1"/>
<dbReference type="STRING" id="212717.CTC_00207"/>
<dbReference type="GeneID" id="24254954"/>
<dbReference type="KEGG" id="ctc:CTC_00207"/>
<dbReference type="HOGENOM" id="CLU_066627_1_0_9"/>
<dbReference type="OrthoDB" id="9804707at2"/>
<dbReference type="UniPathway" id="UPA00241">
    <property type="reaction ID" value="UER00352"/>
</dbReference>
<dbReference type="Proteomes" id="UP000001412">
    <property type="component" value="Chromosome"/>
</dbReference>
<dbReference type="GO" id="GO:0005737">
    <property type="term" value="C:cytoplasm"/>
    <property type="evidence" value="ECO:0007669"/>
    <property type="project" value="UniProtKB-SubCell"/>
</dbReference>
<dbReference type="GO" id="GO:0005524">
    <property type="term" value="F:ATP binding"/>
    <property type="evidence" value="ECO:0007669"/>
    <property type="project" value="UniProtKB-UniRule"/>
</dbReference>
<dbReference type="GO" id="GO:0046872">
    <property type="term" value="F:metal ion binding"/>
    <property type="evidence" value="ECO:0007669"/>
    <property type="project" value="UniProtKB-KW"/>
</dbReference>
<dbReference type="GO" id="GO:0004594">
    <property type="term" value="F:pantothenate kinase activity"/>
    <property type="evidence" value="ECO:0007669"/>
    <property type="project" value="UniProtKB-UniRule"/>
</dbReference>
<dbReference type="GO" id="GO:0015937">
    <property type="term" value="P:coenzyme A biosynthetic process"/>
    <property type="evidence" value="ECO:0007669"/>
    <property type="project" value="UniProtKB-UniRule"/>
</dbReference>
<dbReference type="CDD" id="cd24015">
    <property type="entry name" value="ASKHA_NBD_PanK-III"/>
    <property type="match status" value="1"/>
</dbReference>
<dbReference type="Gene3D" id="3.30.420.40">
    <property type="match status" value="2"/>
</dbReference>
<dbReference type="HAMAP" id="MF_01274">
    <property type="entry name" value="Pantothen_kinase_3"/>
    <property type="match status" value="1"/>
</dbReference>
<dbReference type="InterPro" id="IPR043129">
    <property type="entry name" value="ATPase_NBD"/>
</dbReference>
<dbReference type="InterPro" id="IPR004619">
    <property type="entry name" value="Type_III_PanK"/>
</dbReference>
<dbReference type="NCBIfam" id="TIGR00671">
    <property type="entry name" value="baf"/>
    <property type="match status" value="1"/>
</dbReference>
<dbReference type="NCBIfam" id="NF009847">
    <property type="entry name" value="PRK13318.1-5"/>
    <property type="match status" value="1"/>
</dbReference>
<dbReference type="NCBIfam" id="NF009848">
    <property type="entry name" value="PRK13318.1-6"/>
    <property type="match status" value="1"/>
</dbReference>
<dbReference type="NCBIfam" id="NF009855">
    <property type="entry name" value="PRK13321.1"/>
    <property type="match status" value="1"/>
</dbReference>
<dbReference type="PANTHER" id="PTHR34265">
    <property type="entry name" value="TYPE III PANTOTHENATE KINASE"/>
    <property type="match status" value="1"/>
</dbReference>
<dbReference type="PANTHER" id="PTHR34265:SF1">
    <property type="entry name" value="TYPE III PANTOTHENATE KINASE"/>
    <property type="match status" value="1"/>
</dbReference>
<dbReference type="Pfam" id="PF03309">
    <property type="entry name" value="Pan_kinase"/>
    <property type="match status" value="1"/>
</dbReference>
<dbReference type="SUPFAM" id="SSF53067">
    <property type="entry name" value="Actin-like ATPase domain"/>
    <property type="match status" value="2"/>
</dbReference>
<reference key="1">
    <citation type="journal article" date="2003" name="Proc. Natl. Acad. Sci. U.S.A.">
        <title>The genome sequence of Clostridium tetani, the causative agent of tetanus disease.</title>
        <authorList>
            <person name="Brueggemann H."/>
            <person name="Baeumer S."/>
            <person name="Fricke W.F."/>
            <person name="Wiezer A."/>
            <person name="Liesegang H."/>
            <person name="Decker I."/>
            <person name="Herzberg C."/>
            <person name="Martinez-Arias R."/>
            <person name="Merkl R."/>
            <person name="Henne A."/>
            <person name="Gottschalk G."/>
        </authorList>
    </citation>
    <scope>NUCLEOTIDE SEQUENCE [LARGE SCALE GENOMIC DNA]</scope>
    <source>
        <strain>Massachusetts / E88</strain>
    </source>
</reference>
<keyword id="KW-0067">ATP-binding</keyword>
<keyword id="KW-0173">Coenzyme A biosynthesis</keyword>
<keyword id="KW-0963">Cytoplasm</keyword>
<keyword id="KW-0418">Kinase</keyword>
<keyword id="KW-0479">Metal-binding</keyword>
<keyword id="KW-0547">Nucleotide-binding</keyword>
<keyword id="KW-0630">Potassium</keyword>
<keyword id="KW-1185">Reference proteome</keyword>
<keyword id="KW-0808">Transferase</keyword>
<evidence type="ECO:0000255" key="1">
    <source>
        <dbReference type="HAMAP-Rule" id="MF_01274"/>
    </source>
</evidence>
<name>COAX_CLOTE</name>
<comment type="function">
    <text evidence="1">Catalyzes the phosphorylation of pantothenate (Pan), the first step in CoA biosynthesis.</text>
</comment>
<comment type="catalytic activity">
    <reaction evidence="1">
        <text>(R)-pantothenate + ATP = (R)-4'-phosphopantothenate + ADP + H(+)</text>
        <dbReference type="Rhea" id="RHEA:16373"/>
        <dbReference type="ChEBI" id="CHEBI:10986"/>
        <dbReference type="ChEBI" id="CHEBI:15378"/>
        <dbReference type="ChEBI" id="CHEBI:29032"/>
        <dbReference type="ChEBI" id="CHEBI:30616"/>
        <dbReference type="ChEBI" id="CHEBI:456216"/>
        <dbReference type="EC" id="2.7.1.33"/>
    </reaction>
</comment>
<comment type="cofactor">
    <cofactor evidence="1">
        <name>NH4(+)</name>
        <dbReference type="ChEBI" id="CHEBI:28938"/>
    </cofactor>
    <cofactor evidence="1">
        <name>K(+)</name>
        <dbReference type="ChEBI" id="CHEBI:29103"/>
    </cofactor>
    <text evidence="1">A monovalent cation. Ammonium or potassium.</text>
</comment>
<comment type="pathway">
    <text evidence="1">Cofactor biosynthesis; coenzyme A biosynthesis; CoA from (R)-pantothenate: step 1/5.</text>
</comment>
<comment type="subunit">
    <text evidence="1">Homodimer.</text>
</comment>
<comment type="subcellular location">
    <subcellularLocation>
        <location evidence="1">Cytoplasm</location>
    </subcellularLocation>
</comment>
<comment type="similarity">
    <text evidence="1">Belongs to the type III pantothenate kinase family.</text>
</comment>
<organism>
    <name type="scientific">Clostridium tetani (strain Massachusetts / E88)</name>
    <dbReference type="NCBI Taxonomy" id="212717"/>
    <lineage>
        <taxon>Bacteria</taxon>
        <taxon>Bacillati</taxon>
        <taxon>Bacillota</taxon>
        <taxon>Clostridia</taxon>
        <taxon>Eubacteriales</taxon>
        <taxon>Clostridiaceae</taxon>
        <taxon>Clostridium</taxon>
    </lineage>
</organism>
<proteinExistence type="inferred from homology"/>
<sequence>MILVLDAGNTNMVLGLYEDKNLIADWRLSTDPLRTADEYSIQVIQLFLQSNLRLEDVEGVIVSSVVPNIMYSVEHMVAKYFKKKPIIVGPGTKTGINIKYDNPKEVGADRIVNAVAAHEIYKKPLVIIDFGTATTFCAVTQSGDYLGGAIAPGVKISSEALFEKAAKLPRVELMKPSSVICKNTVSSMQAGMTYGYGGLVDHIVSKIKQELMDSGEKEPLVVATGGLAKLISEESETIDIIHPFLTLEGLRIIYEKNKDLDA</sequence>
<feature type="chain" id="PRO_0000267515" description="Type III pantothenate kinase">
    <location>
        <begin position="1"/>
        <end position="262"/>
    </location>
</feature>
<feature type="active site" description="Proton acceptor" evidence="1">
    <location>
        <position position="109"/>
    </location>
</feature>
<feature type="binding site" evidence="1">
    <location>
        <begin position="6"/>
        <end position="13"/>
    </location>
    <ligand>
        <name>ATP</name>
        <dbReference type="ChEBI" id="CHEBI:30616"/>
    </ligand>
</feature>
<feature type="binding site" evidence="1">
    <location>
        <position position="100"/>
    </location>
    <ligand>
        <name>substrate</name>
    </ligand>
</feature>
<feature type="binding site" evidence="1">
    <location>
        <begin position="107"/>
        <end position="110"/>
    </location>
    <ligand>
        <name>substrate</name>
    </ligand>
</feature>
<feature type="binding site" evidence="1">
    <location>
        <position position="129"/>
    </location>
    <ligand>
        <name>K(+)</name>
        <dbReference type="ChEBI" id="CHEBI:29103"/>
    </ligand>
</feature>
<feature type="binding site" evidence="1">
    <location>
        <position position="132"/>
    </location>
    <ligand>
        <name>ATP</name>
        <dbReference type="ChEBI" id="CHEBI:30616"/>
    </ligand>
</feature>
<feature type="binding site" evidence="1">
    <location>
        <position position="184"/>
    </location>
    <ligand>
        <name>substrate</name>
    </ligand>
</feature>
<gene>
    <name evidence="1" type="primary">coaX</name>
    <name type="ordered locus">CTC_00207</name>
</gene>